<name>Y378_BORBU</name>
<organism>
    <name type="scientific">Borreliella burgdorferi (strain ATCC 35210 / DSM 4680 / CIP 102532 / B31)</name>
    <name type="common">Borrelia burgdorferi</name>
    <dbReference type="NCBI Taxonomy" id="224326"/>
    <lineage>
        <taxon>Bacteria</taxon>
        <taxon>Pseudomonadati</taxon>
        <taxon>Spirochaetota</taxon>
        <taxon>Spirochaetia</taxon>
        <taxon>Spirochaetales</taxon>
        <taxon>Borreliaceae</taxon>
        <taxon>Borreliella</taxon>
    </lineage>
</organism>
<gene>
    <name type="ordered locus">BB_0378</name>
</gene>
<accession>O50165</accession>
<protein>
    <recommendedName>
        <fullName>Uncharacterized protein BB_0378</fullName>
    </recommendedName>
</protein>
<keyword id="KW-1185">Reference proteome</keyword>
<proteinExistence type="predicted"/>
<dbReference type="EMBL" id="AE000783">
    <property type="protein sequence ID" value="AAC66765.1"/>
    <property type="molecule type" value="Genomic_DNA"/>
</dbReference>
<dbReference type="PIR" id="A70147">
    <property type="entry name" value="A70147"/>
</dbReference>
<dbReference type="RefSeq" id="NP_212512.1">
    <property type="nucleotide sequence ID" value="NC_001318.1"/>
</dbReference>
<dbReference type="RefSeq" id="WP_002665195.1">
    <property type="nucleotide sequence ID" value="NC_001318.1"/>
</dbReference>
<dbReference type="STRING" id="224326.BB_0378"/>
<dbReference type="PaxDb" id="224326-BB_0378"/>
<dbReference type="EnsemblBacteria" id="AAC66765">
    <property type="protein sequence ID" value="AAC66765"/>
    <property type="gene ID" value="BB_0378"/>
</dbReference>
<dbReference type="KEGG" id="bbu:BB_0378"/>
<dbReference type="PATRIC" id="fig|224326.49.peg.773"/>
<dbReference type="HOGENOM" id="CLU_1253935_0_0_12"/>
<dbReference type="OrthoDB" id="351986at2"/>
<dbReference type="Proteomes" id="UP000001807">
    <property type="component" value="Chromosome"/>
</dbReference>
<sequence>MRRNFLFFFVFMLNAFRIYSGIPSYLNVYSGVGLGVDNFTQDLFFYERLKYQFFSGVGVNVSQNLAFGGEFNLDIKFLPSHTPYTNEIIFMLDDQAYLKHSLNYFIIKDVSFSLRMYGNYFFLSYTPMFSLIFFTGLKFSYIGAKICFVDSRDWVLLDNFVLGIDIGARINVDFIFLEYTISPIFYNKPLLLNQMHKITLGFIFQFDVATKNESEILSIL</sequence>
<reference key="1">
    <citation type="journal article" date="1997" name="Nature">
        <title>Genomic sequence of a Lyme disease spirochaete, Borrelia burgdorferi.</title>
        <authorList>
            <person name="Fraser C.M."/>
            <person name="Casjens S."/>
            <person name="Huang W.M."/>
            <person name="Sutton G.G."/>
            <person name="Clayton R.A."/>
            <person name="Lathigra R."/>
            <person name="White O."/>
            <person name="Ketchum K.A."/>
            <person name="Dodson R.J."/>
            <person name="Hickey E.K."/>
            <person name="Gwinn M.L."/>
            <person name="Dougherty B.A."/>
            <person name="Tomb J.-F."/>
            <person name="Fleischmann R.D."/>
            <person name="Richardson D.L."/>
            <person name="Peterson J.D."/>
            <person name="Kerlavage A.R."/>
            <person name="Quackenbush J."/>
            <person name="Salzberg S.L."/>
            <person name="Hanson M."/>
            <person name="van Vugt R."/>
            <person name="Palmer N."/>
            <person name="Adams M.D."/>
            <person name="Gocayne J.D."/>
            <person name="Weidman J.F."/>
            <person name="Utterback T.R."/>
            <person name="Watthey L."/>
            <person name="McDonald L.A."/>
            <person name="Artiach P."/>
            <person name="Bowman C."/>
            <person name="Garland S.A."/>
            <person name="Fujii C."/>
            <person name="Cotton M.D."/>
            <person name="Horst K."/>
            <person name="Roberts K.M."/>
            <person name="Hatch B."/>
            <person name="Smith H.O."/>
            <person name="Venter J.C."/>
        </authorList>
    </citation>
    <scope>NUCLEOTIDE SEQUENCE [LARGE SCALE GENOMIC DNA]</scope>
    <source>
        <strain>ATCC 35210 / DSM 4680 / CIP 102532 / B31</strain>
    </source>
</reference>
<feature type="chain" id="PRO_0000174398" description="Uncharacterized protein BB_0378">
    <location>
        <begin position="1"/>
        <end position="220"/>
    </location>
</feature>